<comment type="function">
    <text evidence="1">This protein is located at the 30S-50S ribosomal subunit interface and may play a role in the structure and function of the aminoacyl-tRNA binding site.</text>
</comment>
<comment type="similarity">
    <text evidence="1">Belongs to the bacterial ribosomal protein bL19 family.</text>
</comment>
<name>RL19_STRMU</name>
<sequence>MNPLIQSLTESQLRTDIPNFRPGDTVRVHAKVVEGNRERVQIFEGVVISRKGQGISEMYTVRKISSGVGVERTFPTHTPRVEKIEVTRHGKVRRAKLYYLRALQGKAARIKEVRQ</sequence>
<gene>
    <name evidence="1" type="primary">rplS</name>
    <name type="synonym">rl19</name>
    <name type="ordered locus">SMU_1288</name>
</gene>
<reference key="1">
    <citation type="journal article" date="2002" name="Proc. Natl. Acad. Sci. U.S.A.">
        <title>Genome sequence of Streptococcus mutans UA159, a cariogenic dental pathogen.</title>
        <authorList>
            <person name="Ajdic D.J."/>
            <person name="McShan W.M."/>
            <person name="McLaughlin R.E."/>
            <person name="Savic G."/>
            <person name="Chang J."/>
            <person name="Carson M.B."/>
            <person name="Primeaux C."/>
            <person name="Tian R."/>
            <person name="Kenton S."/>
            <person name="Jia H.G."/>
            <person name="Lin S.P."/>
            <person name="Qian Y."/>
            <person name="Li S."/>
            <person name="Zhu H."/>
            <person name="Najar F.Z."/>
            <person name="Lai H."/>
            <person name="White J."/>
            <person name="Roe B.A."/>
            <person name="Ferretti J.J."/>
        </authorList>
    </citation>
    <scope>NUCLEOTIDE SEQUENCE [LARGE SCALE GENOMIC DNA]</scope>
    <source>
        <strain>ATCC 700610 / UA159</strain>
    </source>
</reference>
<keyword id="KW-1185">Reference proteome</keyword>
<keyword id="KW-0687">Ribonucleoprotein</keyword>
<keyword id="KW-0689">Ribosomal protein</keyword>
<feature type="chain" id="PRO_0000163541" description="Large ribosomal subunit protein bL19">
    <location>
        <begin position="1"/>
        <end position="115"/>
    </location>
</feature>
<accession>Q8DTP5</accession>
<protein>
    <recommendedName>
        <fullName evidence="1">Large ribosomal subunit protein bL19</fullName>
    </recommendedName>
    <alternativeName>
        <fullName evidence="2">50S ribosomal protein L19</fullName>
    </alternativeName>
</protein>
<organism>
    <name type="scientific">Streptococcus mutans serotype c (strain ATCC 700610 / UA159)</name>
    <dbReference type="NCBI Taxonomy" id="210007"/>
    <lineage>
        <taxon>Bacteria</taxon>
        <taxon>Bacillati</taxon>
        <taxon>Bacillota</taxon>
        <taxon>Bacilli</taxon>
        <taxon>Lactobacillales</taxon>
        <taxon>Streptococcaceae</taxon>
        <taxon>Streptococcus</taxon>
    </lineage>
</organism>
<evidence type="ECO:0000255" key="1">
    <source>
        <dbReference type="HAMAP-Rule" id="MF_00402"/>
    </source>
</evidence>
<evidence type="ECO:0000305" key="2"/>
<proteinExistence type="inferred from homology"/>
<dbReference type="EMBL" id="AE014133">
    <property type="protein sequence ID" value="AAN58965.1"/>
    <property type="molecule type" value="Genomic_DNA"/>
</dbReference>
<dbReference type="RefSeq" id="NP_721659.1">
    <property type="nucleotide sequence ID" value="NC_004350.2"/>
</dbReference>
<dbReference type="RefSeq" id="WP_002263158.1">
    <property type="nucleotide sequence ID" value="NC_004350.2"/>
</dbReference>
<dbReference type="SMR" id="Q8DTP5"/>
<dbReference type="STRING" id="210007.SMU_1288"/>
<dbReference type="KEGG" id="smu:SMU_1288"/>
<dbReference type="PATRIC" id="fig|210007.7.peg.1153"/>
<dbReference type="eggNOG" id="COG0335">
    <property type="taxonomic scope" value="Bacteria"/>
</dbReference>
<dbReference type="HOGENOM" id="CLU_103507_2_1_9"/>
<dbReference type="OrthoDB" id="9803541at2"/>
<dbReference type="PhylomeDB" id="Q8DTP5"/>
<dbReference type="Proteomes" id="UP000002512">
    <property type="component" value="Chromosome"/>
</dbReference>
<dbReference type="GO" id="GO:0022625">
    <property type="term" value="C:cytosolic large ribosomal subunit"/>
    <property type="evidence" value="ECO:0007669"/>
    <property type="project" value="TreeGrafter"/>
</dbReference>
<dbReference type="GO" id="GO:0003735">
    <property type="term" value="F:structural constituent of ribosome"/>
    <property type="evidence" value="ECO:0007669"/>
    <property type="project" value="InterPro"/>
</dbReference>
<dbReference type="GO" id="GO:0006412">
    <property type="term" value="P:translation"/>
    <property type="evidence" value="ECO:0007669"/>
    <property type="project" value="UniProtKB-UniRule"/>
</dbReference>
<dbReference type="FunFam" id="2.30.30.790:FF:000001">
    <property type="entry name" value="50S ribosomal protein L19"/>
    <property type="match status" value="1"/>
</dbReference>
<dbReference type="Gene3D" id="2.30.30.790">
    <property type="match status" value="1"/>
</dbReference>
<dbReference type="HAMAP" id="MF_00402">
    <property type="entry name" value="Ribosomal_bL19"/>
    <property type="match status" value="1"/>
</dbReference>
<dbReference type="InterPro" id="IPR001857">
    <property type="entry name" value="Ribosomal_bL19"/>
</dbReference>
<dbReference type="InterPro" id="IPR018257">
    <property type="entry name" value="Ribosomal_bL19_CS"/>
</dbReference>
<dbReference type="InterPro" id="IPR038657">
    <property type="entry name" value="Ribosomal_bL19_sf"/>
</dbReference>
<dbReference type="InterPro" id="IPR008991">
    <property type="entry name" value="Translation_prot_SH3-like_sf"/>
</dbReference>
<dbReference type="NCBIfam" id="TIGR01024">
    <property type="entry name" value="rplS_bact"/>
    <property type="match status" value="1"/>
</dbReference>
<dbReference type="PANTHER" id="PTHR15680:SF9">
    <property type="entry name" value="LARGE RIBOSOMAL SUBUNIT PROTEIN BL19M"/>
    <property type="match status" value="1"/>
</dbReference>
<dbReference type="PANTHER" id="PTHR15680">
    <property type="entry name" value="RIBOSOMAL PROTEIN L19"/>
    <property type="match status" value="1"/>
</dbReference>
<dbReference type="Pfam" id="PF01245">
    <property type="entry name" value="Ribosomal_L19"/>
    <property type="match status" value="1"/>
</dbReference>
<dbReference type="PIRSF" id="PIRSF002191">
    <property type="entry name" value="Ribosomal_L19"/>
    <property type="match status" value="1"/>
</dbReference>
<dbReference type="PRINTS" id="PR00061">
    <property type="entry name" value="RIBOSOMALL19"/>
</dbReference>
<dbReference type="SUPFAM" id="SSF50104">
    <property type="entry name" value="Translation proteins SH3-like domain"/>
    <property type="match status" value="1"/>
</dbReference>
<dbReference type="PROSITE" id="PS01015">
    <property type="entry name" value="RIBOSOMAL_L19"/>
    <property type="match status" value="1"/>
</dbReference>